<gene>
    <name type="primary">OPG051</name>
    <name type="ordered locus">VACWR046</name>
    <name type="ORF">F7L</name>
</gene>
<organism>
    <name type="scientific">Vaccinia virus (strain Western Reserve)</name>
    <name type="common">VACV</name>
    <name type="synonym">Vaccinia virus (strain WR)</name>
    <dbReference type="NCBI Taxonomy" id="10254"/>
    <lineage>
        <taxon>Viruses</taxon>
        <taxon>Varidnaviria</taxon>
        <taxon>Bamfordvirae</taxon>
        <taxon>Nucleocytoviricota</taxon>
        <taxon>Pokkesviricetes</taxon>
        <taxon>Chitovirales</taxon>
        <taxon>Poxviridae</taxon>
        <taxon>Chordopoxvirinae</taxon>
        <taxon>Orthopoxvirus</taxon>
        <taxon>Vaccinia virus</taxon>
    </lineage>
</organism>
<keyword id="KW-0244">Early protein</keyword>
<keyword id="KW-1185">Reference proteome</keyword>
<dbReference type="EMBL" id="M34368">
    <property type="protein sequence ID" value="AAA48241.1"/>
    <property type="molecule type" value="mRNA"/>
</dbReference>
<dbReference type="EMBL" id="AY243312">
    <property type="protein sequence ID" value="AAO89325.1"/>
    <property type="molecule type" value="Genomic_DNA"/>
</dbReference>
<dbReference type="PIR" id="C36213">
    <property type="entry name" value="C36213"/>
</dbReference>
<dbReference type="RefSeq" id="YP_232928.1">
    <property type="nucleotide sequence ID" value="NC_006998.1"/>
</dbReference>
<dbReference type="DNASU" id="3707503"/>
<dbReference type="GeneID" id="3707503"/>
<dbReference type="KEGG" id="vg:3707503"/>
<dbReference type="Proteomes" id="UP000000344">
    <property type="component" value="Genome"/>
</dbReference>
<dbReference type="InterPro" id="IPR008725">
    <property type="entry name" value="Orthopox_F7"/>
</dbReference>
<dbReference type="Pfam" id="PF05813">
    <property type="entry name" value="Orthopox_F7"/>
    <property type="match status" value="1"/>
</dbReference>
<evidence type="ECO:0000269" key="1">
    <source>
    </source>
</evidence>
<evidence type="ECO:0000305" key="2"/>
<name>PG051_VACCW</name>
<organismHost>
    <name type="scientific">Bos taurus</name>
    <name type="common">Bovine</name>
    <dbReference type="NCBI Taxonomy" id="9913"/>
</organismHost>
<feature type="chain" id="PRO_0000099485" description="Protein OPG051">
    <location>
        <begin position="1"/>
        <end position="80"/>
    </location>
</feature>
<proteinExistence type="evidence at transcript level"/>
<accession>P24359</accession>
<accession>Q80HX8</accession>
<sequence length="80" mass="9425">MTLVMGSCCGRFCDAKNKNKKEDVEEGREGCYNYKNLNDLDESEARVEFGPLYMINEEKSDINTLDIKRRYRHTIESVYF</sequence>
<reference key="1">
    <citation type="journal article" date="1990" name="Virology">
        <title>The vaccinia virus HindIII F fragment: nucleotide sequence of the left 6.2 kb.</title>
        <authorList>
            <person name="Roseman N.A."/>
            <person name="Slabaugh M.B."/>
        </authorList>
    </citation>
    <scope>NUCLEOTIDE SEQUENCE [MRNA]</scope>
</reference>
<reference key="2">
    <citation type="submission" date="2003-02" db="EMBL/GenBank/DDBJ databases">
        <title>Sequencing of the coding region of Vaccinia-WR to an average 9-fold redundancy and an error rate of 0.16/10kb.</title>
        <authorList>
            <person name="Esposito J.J."/>
            <person name="Frace A.M."/>
            <person name="Sammons S.A."/>
            <person name="Olsen-Rasmussen M."/>
            <person name="Osborne J."/>
            <person name="Wohlhueter R."/>
        </authorList>
    </citation>
    <scope>NUCLEOTIDE SEQUENCE [LARGE SCALE GENOMIC DNA]</scope>
</reference>
<reference key="3">
    <citation type="journal article" date="2015" name="J. Virol.">
        <title>Deciphering poxvirus gene expression by RNA sequencing and ribosome profiling.</title>
        <authorList>
            <person name="Yang Z."/>
            <person name="Cao S."/>
            <person name="Martens C.A."/>
            <person name="Porcella S.F."/>
            <person name="Xie Z."/>
            <person name="Ma M."/>
            <person name="Shen B."/>
            <person name="Moss B."/>
        </authorList>
    </citation>
    <scope>INDUCTION</scope>
</reference>
<protein>
    <recommendedName>
        <fullName>Protein OPG051</fullName>
    </recommendedName>
    <alternativeName>
        <fullName>Protein F7</fullName>
    </alternativeName>
</protein>
<comment type="induction">
    <text evidence="1">Expressed in the early phase of the viral replicative cycle.</text>
</comment>
<comment type="similarity">
    <text evidence="2">Belongs to the orthopoxvirus OPG051 family.</text>
</comment>